<reference key="1">
    <citation type="submission" date="2006-02" db="EMBL/GenBank/DDBJ databases">
        <title>Cloning and characterization of lamB gene of Aeromonas hydrophila.</title>
        <authorList>
            <person name="Upadhyaya T."/>
            <person name="Singh R.K."/>
            <person name="Dixit A."/>
        </authorList>
    </citation>
    <scope>NUCLEOTIDE SEQUENCE [GENOMIC DNA]</scope>
    <source>
        <strain>EUS112</strain>
    </source>
</reference>
<proteinExistence type="inferred from homology"/>
<accession>Q8KKH0</accession>
<accession>Q8KKH1</accession>
<keyword id="KW-0024">Alternative initiation</keyword>
<keyword id="KW-0998">Cell outer membrane</keyword>
<keyword id="KW-0406">Ion transport</keyword>
<keyword id="KW-0472">Membrane</keyword>
<keyword id="KW-0626">Porin</keyword>
<keyword id="KW-0732">Signal</keyword>
<keyword id="KW-0762">Sugar transport</keyword>
<keyword id="KW-0812">Transmembrane</keyword>
<keyword id="KW-1134">Transmembrane beta strand</keyword>
<keyword id="KW-0813">Transport</keyword>
<name>LAMB_AERHY</name>
<comment type="function">
    <text evidence="2">Involved in the transport of maltose and maltodextrins.</text>
</comment>
<comment type="catalytic activity">
    <reaction evidence="2">
        <text>beta-maltose(in) = beta-maltose(out)</text>
        <dbReference type="Rhea" id="RHEA:29731"/>
        <dbReference type="ChEBI" id="CHEBI:18147"/>
    </reaction>
</comment>
<comment type="subunit">
    <text evidence="2">Homotrimer formed of three 18-stranded antiparallel beta-barrels, containing three independent channels.</text>
</comment>
<comment type="subcellular location">
    <subcellularLocation>
        <location evidence="2">Cell outer membrane</location>
        <topology evidence="2">Multi-pass membrane protein</topology>
    </subcellularLocation>
</comment>
<comment type="alternative products">
    <event type="alternative initiation"/>
    <isoform>
        <id>Q8KKH0-1</id>
        <name>1</name>
        <sequence type="displayed"/>
    </isoform>
    <isoform>
        <id>Q8KKH0-2</id>
        <name>2</name>
        <sequence type="described" ref="VSP_018984"/>
    </isoform>
</comment>
<comment type="induction">
    <text evidence="2 3">By maltose.</text>
</comment>
<comment type="miscellaneous">
    <molecule>Isoform 2</molecule>
    <text evidence="3">Contains a signal peptide at positions 1-22.</text>
</comment>
<comment type="similarity">
    <text evidence="2 3">Belongs to the porin LamB (TC 1.B.3) family.</text>
</comment>
<organism>
    <name type="scientific">Aeromonas hydrophila</name>
    <dbReference type="NCBI Taxonomy" id="644"/>
    <lineage>
        <taxon>Bacteria</taxon>
        <taxon>Pseudomonadati</taxon>
        <taxon>Pseudomonadota</taxon>
        <taxon>Gammaproteobacteria</taxon>
        <taxon>Aeromonadales</taxon>
        <taxon>Aeromonadaceae</taxon>
        <taxon>Aeromonas</taxon>
    </lineage>
</organism>
<gene>
    <name evidence="2" type="primary">lamB</name>
    <name type="synonym">lamB1</name>
    <name type="synonym">lamB2</name>
</gene>
<protein>
    <recommendedName>
        <fullName evidence="2">Maltoporin</fullName>
    </recommendedName>
    <alternativeName>
        <fullName evidence="2">Maltose-inducible porin</fullName>
    </alternativeName>
</protein>
<dbReference type="EMBL" id="AJ493581">
    <property type="protein sequence ID" value="CAD43291.2"/>
    <property type="molecule type" value="Genomic_DNA"/>
</dbReference>
<dbReference type="EMBL" id="AJ493581">
    <property type="protein sequence ID" value="CAD43292.2"/>
    <property type="molecule type" value="Genomic_DNA"/>
</dbReference>
<dbReference type="SMR" id="Q8KKH0"/>
<dbReference type="GO" id="GO:0009279">
    <property type="term" value="C:cell outer membrane"/>
    <property type="evidence" value="ECO:0007669"/>
    <property type="project" value="UniProtKB-SubCell"/>
</dbReference>
<dbReference type="GO" id="GO:0046930">
    <property type="term" value="C:pore complex"/>
    <property type="evidence" value="ECO:0007669"/>
    <property type="project" value="UniProtKB-KW"/>
</dbReference>
<dbReference type="GO" id="GO:0042958">
    <property type="term" value="F:maltodextrin transmembrane transporter activity"/>
    <property type="evidence" value="ECO:0007669"/>
    <property type="project" value="InterPro"/>
</dbReference>
<dbReference type="GO" id="GO:0015481">
    <property type="term" value="F:maltose transporting porin activity"/>
    <property type="evidence" value="ECO:0007669"/>
    <property type="project" value="InterPro"/>
</dbReference>
<dbReference type="GO" id="GO:0006811">
    <property type="term" value="P:monoatomic ion transport"/>
    <property type="evidence" value="ECO:0007669"/>
    <property type="project" value="UniProtKB-KW"/>
</dbReference>
<dbReference type="CDD" id="cd01346">
    <property type="entry name" value="Maltoporin-like"/>
    <property type="match status" value="1"/>
</dbReference>
<dbReference type="Gene3D" id="2.40.170.10">
    <property type="entry name" value="Porin, LamB type"/>
    <property type="match status" value="1"/>
</dbReference>
<dbReference type="HAMAP" id="MF_01301">
    <property type="entry name" value="LamB"/>
    <property type="match status" value="1"/>
</dbReference>
<dbReference type="InterPro" id="IPR050286">
    <property type="entry name" value="G_neg_Bact_CarbUptk_Porin"/>
</dbReference>
<dbReference type="InterPro" id="IPR023738">
    <property type="entry name" value="Maltoporin"/>
</dbReference>
<dbReference type="InterPro" id="IPR003192">
    <property type="entry name" value="Porin_LamB"/>
</dbReference>
<dbReference type="InterPro" id="IPR036998">
    <property type="entry name" value="Porin_LamB_sf"/>
</dbReference>
<dbReference type="NCBIfam" id="NF006860">
    <property type="entry name" value="PRK09360.1"/>
    <property type="match status" value="1"/>
</dbReference>
<dbReference type="PANTHER" id="PTHR38762">
    <property type="entry name" value="CRYPTIC OUTER MEMBRANE PORIN BGLH-RELATED"/>
    <property type="match status" value="1"/>
</dbReference>
<dbReference type="PANTHER" id="PTHR38762:SF1">
    <property type="entry name" value="CRYPTIC OUTER MEMBRANE PORIN BGLH-RELATED"/>
    <property type="match status" value="1"/>
</dbReference>
<dbReference type="Pfam" id="PF02264">
    <property type="entry name" value="LamB"/>
    <property type="match status" value="1"/>
</dbReference>
<dbReference type="SUPFAM" id="SSF56935">
    <property type="entry name" value="Porins"/>
    <property type="match status" value="1"/>
</dbReference>
<sequence length="434" mass="48024">MKMKAKWLPIAAAVTAALASQAAFAVDFHGYFRSGVGVSSDGDMQTLSKQKVGRLGNEDDTYGEVQLGQEVFNKDGKTFYVDSMFAMIPNGSNDWEGTGSVCNFDEKQCSGDSEFALRQFNVQAKGLLGFAPEATLWAGKRYYQRHDIHISDFYYWNISGAGAGIEGVQAGPGKISFAWVRNDRGWDGKDGWTKFEGMDVNTLDLRYAGIPLWQDASLEVGVDYAIANPTDAQKDSSNVQYKNAKDGVMLTAELTQGIFGGFNKTVLQYGTEGYSKTMAFYGDGSWYGAEAKDGADGFRIINHGVIPMGNSWEMGHQLVYGVGNDMWDGNDKWETMSVVARPMYKWDDFNKTIFEGGYFKDKNKSTNGSSLEDSGYKLTLSQTWSAGSSFWARPEIRVFTSYAALDDNDMAGTPYNSKTSKDTWNFGVQAEAWW</sequence>
<evidence type="ECO:0000255" key="1"/>
<evidence type="ECO:0000255" key="2">
    <source>
        <dbReference type="HAMAP-Rule" id="MF_01301"/>
    </source>
</evidence>
<evidence type="ECO:0000305" key="3"/>
<feature type="signal peptide" evidence="1">
    <location>
        <begin position="1"/>
        <end position="25"/>
    </location>
</feature>
<feature type="chain" id="PRO_0000237574" description="Maltoporin">
    <location>
        <begin position="26"/>
        <end position="434"/>
    </location>
</feature>
<feature type="site" description="Greasy slide, important in sugar transport" evidence="2">
    <location>
        <position position="31"/>
    </location>
</feature>
<feature type="site" description="Greasy slide, important in sugar transport" evidence="2">
    <location>
        <position position="62"/>
    </location>
</feature>
<feature type="site" description="Greasy slide, important in sugar transport" evidence="2">
    <location>
        <position position="95"/>
    </location>
</feature>
<feature type="site" description="Important in sugar transport" evidence="2">
    <location>
        <position position="154"/>
    </location>
</feature>
<feature type="site" description="Greasy slide, important in sugar transport" evidence="2">
    <location>
        <position position="262"/>
    </location>
</feature>
<feature type="site" description="Greasy slide, important in sugar transport" evidence="2">
    <location>
        <position position="391"/>
    </location>
</feature>
<feature type="site" description="Greasy slide, important in sugar transport" evidence="2">
    <location>
        <position position="433"/>
    </location>
</feature>
<feature type="splice variant" id="VSP_018984" description="In isoform 2." evidence="3">
    <location>
        <begin position="1"/>
        <end position="2"/>
    </location>
</feature>